<gene>
    <name evidence="1" type="primary">gcvP</name>
    <name type="ordered locus">XCC1112</name>
</gene>
<keyword id="KW-0560">Oxidoreductase</keyword>
<keyword id="KW-0663">Pyridoxal phosphate</keyword>
<keyword id="KW-1185">Reference proteome</keyword>
<accession>Q8PBK7</accession>
<sequence length="975" mass="104719">MSQTPSSLRDLEHHSAFVERHIGPNDAEIAQMLGVVGHDSLDAMTDAIVPSNIKSPAALALPDAITEEEALARIRAIASKNQVQRTFIGQGYYGTHTPKVILRNILENPAWYTAYTPYQAEISQGRMEALINFQTMCADLTGMQIANASLLDEATAAAEAMTLAKRSAKSKSDTFFVHDAVHPQTQELLRTRAEPLGIVLRVGTPDEAMQAECFGVLLQYPDSFGHIGDHAALADAVHAQGGLVAVATDLLALTLIAAPGEWGADIVVGNSQRFGVPFGFGGPHAAFMACRDAYKRSMPGRLIGVSIDAAGNPAYRLTLQTREQHIRREKATSNICTAQVLLAVMASMYAVYHGPEGLTRIARRTHRLAAILAAALRSAGVTVGEHFFDTLHVKAIDADAIHAKAHAAGINLRAIDSEAVGISLDETSTRADVVALAQLFGAQADIDALDAATADALPQGMRRTSAFLQHPVFNTHHSEHELLRYMRSLADKDLAMDRTMIPLGSCTMKLNATAEMIPVTWPEFGAIHPLAPPEQSAGYAQLIEELEAMLVECTGYDAVSLQPNSGAQGEYAGLLAIRAYHRSRNEAHRDICLIPESAHGTNPASAQMCGMTVVVTKCDANGNVDVDDIRAKAEKYSDRLAALMITYPSTHGVFEEDVVAICEAVHAHGGQVYTDGANMNALVGVAKPGKWGSDVSHLNLHKTFCIPHGGGGPGVGPCAVKSHLAPFLPKTLPNAGIRAGENQKAAIHGSGSNFGEGEVGMVSAASYGSASILPISWMYVTMMGSAGLRKATQVALLNANYIAKRLSAHYKTLYTGRNGLVAHECILDVRPLEKTSGIGAEDIAKRLIDFGFHAPTLSFPVAGTLMVEPTESESQHELDRFIDAMIQIREEIRAIEDGRLDREDNPLKHAPHTATQVSASEWTHAYPRELAAFPLPSLKQQKYWPPVGRVDNVYGDKNVMCACIPVDAYKDDVVA</sequence>
<organism>
    <name type="scientific">Xanthomonas campestris pv. campestris (strain ATCC 33913 / DSM 3586 / NCPPB 528 / LMG 568 / P 25)</name>
    <dbReference type="NCBI Taxonomy" id="190485"/>
    <lineage>
        <taxon>Bacteria</taxon>
        <taxon>Pseudomonadati</taxon>
        <taxon>Pseudomonadota</taxon>
        <taxon>Gammaproteobacteria</taxon>
        <taxon>Lysobacterales</taxon>
        <taxon>Lysobacteraceae</taxon>
        <taxon>Xanthomonas</taxon>
    </lineage>
</organism>
<reference key="1">
    <citation type="journal article" date="2002" name="Nature">
        <title>Comparison of the genomes of two Xanthomonas pathogens with differing host specificities.</title>
        <authorList>
            <person name="da Silva A.C.R."/>
            <person name="Ferro J.A."/>
            <person name="Reinach F.C."/>
            <person name="Farah C.S."/>
            <person name="Furlan L.R."/>
            <person name="Quaggio R.B."/>
            <person name="Monteiro-Vitorello C.B."/>
            <person name="Van Sluys M.A."/>
            <person name="Almeida N.F. Jr."/>
            <person name="Alves L.M.C."/>
            <person name="do Amaral A.M."/>
            <person name="Bertolini M.C."/>
            <person name="Camargo L.E.A."/>
            <person name="Camarotte G."/>
            <person name="Cannavan F."/>
            <person name="Cardozo J."/>
            <person name="Chambergo F."/>
            <person name="Ciapina L.P."/>
            <person name="Cicarelli R.M.B."/>
            <person name="Coutinho L.L."/>
            <person name="Cursino-Santos J.R."/>
            <person name="El-Dorry H."/>
            <person name="Faria J.B."/>
            <person name="Ferreira A.J.S."/>
            <person name="Ferreira R.C.C."/>
            <person name="Ferro M.I.T."/>
            <person name="Formighieri E.F."/>
            <person name="Franco M.C."/>
            <person name="Greggio C.C."/>
            <person name="Gruber A."/>
            <person name="Katsuyama A.M."/>
            <person name="Kishi L.T."/>
            <person name="Leite R.P."/>
            <person name="Lemos E.G.M."/>
            <person name="Lemos M.V.F."/>
            <person name="Locali E.C."/>
            <person name="Machado M.A."/>
            <person name="Madeira A.M.B.N."/>
            <person name="Martinez-Rossi N.M."/>
            <person name="Martins E.C."/>
            <person name="Meidanis J."/>
            <person name="Menck C.F.M."/>
            <person name="Miyaki C.Y."/>
            <person name="Moon D.H."/>
            <person name="Moreira L.M."/>
            <person name="Novo M.T.M."/>
            <person name="Okura V.K."/>
            <person name="Oliveira M.C."/>
            <person name="Oliveira V.R."/>
            <person name="Pereira H.A."/>
            <person name="Rossi A."/>
            <person name="Sena J.A.D."/>
            <person name="Silva C."/>
            <person name="de Souza R.F."/>
            <person name="Spinola L.A.F."/>
            <person name="Takita M.A."/>
            <person name="Tamura R.E."/>
            <person name="Teixeira E.C."/>
            <person name="Tezza R.I.D."/>
            <person name="Trindade dos Santos M."/>
            <person name="Truffi D."/>
            <person name="Tsai S.M."/>
            <person name="White F.F."/>
            <person name="Setubal J.C."/>
            <person name="Kitajima J.P."/>
        </authorList>
    </citation>
    <scope>NUCLEOTIDE SEQUENCE [LARGE SCALE GENOMIC DNA]</scope>
    <source>
        <strain>ATCC 33913 / DSM 3586 / NCPPB 528 / LMG 568 / P 25</strain>
    </source>
</reference>
<proteinExistence type="inferred from homology"/>
<feature type="chain" id="PRO_0000166949" description="Glycine dehydrogenase (decarboxylating)">
    <location>
        <begin position="1"/>
        <end position="975"/>
    </location>
</feature>
<feature type="modified residue" description="N6-(pyridoxal phosphate)lysine" evidence="1">
    <location>
        <position position="702"/>
    </location>
</feature>
<comment type="function">
    <text evidence="1">The glycine cleavage system catalyzes the degradation of glycine. The P protein binds the alpha-amino group of glycine through its pyridoxal phosphate cofactor; CO(2) is released and the remaining methylamine moiety is then transferred to the lipoamide cofactor of the H protein.</text>
</comment>
<comment type="catalytic activity">
    <reaction evidence="1">
        <text>N(6)-[(R)-lipoyl]-L-lysyl-[glycine-cleavage complex H protein] + glycine + H(+) = N(6)-[(R)-S(8)-aminomethyldihydrolipoyl]-L-lysyl-[glycine-cleavage complex H protein] + CO2</text>
        <dbReference type="Rhea" id="RHEA:24304"/>
        <dbReference type="Rhea" id="RHEA-COMP:10494"/>
        <dbReference type="Rhea" id="RHEA-COMP:10495"/>
        <dbReference type="ChEBI" id="CHEBI:15378"/>
        <dbReference type="ChEBI" id="CHEBI:16526"/>
        <dbReference type="ChEBI" id="CHEBI:57305"/>
        <dbReference type="ChEBI" id="CHEBI:83099"/>
        <dbReference type="ChEBI" id="CHEBI:83143"/>
        <dbReference type="EC" id="1.4.4.2"/>
    </reaction>
</comment>
<comment type="cofactor">
    <cofactor evidence="1">
        <name>pyridoxal 5'-phosphate</name>
        <dbReference type="ChEBI" id="CHEBI:597326"/>
    </cofactor>
</comment>
<comment type="subunit">
    <text evidence="1">The glycine cleavage system is composed of four proteins: P, T, L and H.</text>
</comment>
<comment type="similarity">
    <text evidence="1">Belongs to the GcvP family.</text>
</comment>
<dbReference type="EC" id="1.4.4.2" evidence="1"/>
<dbReference type="EMBL" id="AE008922">
    <property type="protein sequence ID" value="AAM40411.1"/>
    <property type="molecule type" value="Genomic_DNA"/>
</dbReference>
<dbReference type="RefSeq" id="NP_636487.1">
    <property type="nucleotide sequence ID" value="NC_003902.1"/>
</dbReference>
<dbReference type="RefSeq" id="WP_011036312.1">
    <property type="nucleotide sequence ID" value="NC_003902.1"/>
</dbReference>
<dbReference type="SMR" id="Q8PBK7"/>
<dbReference type="STRING" id="190485.XCC1112"/>
<dbReference type="EnsemblBacteria" id="AAM40411">
    <property type="protein sequence ID" value="AAM40411"/>
    <property type="gene ID" value="XCC1112"/>
</dbReference>
<dbReference type="KEGG" id="xcc:XCC1112"/>
<dbReference type="PATRIC" id="fig|190485.4.peg.1188"/>
<dbReference type="eggNOG" id="COG0403">
    <property type="taxonomic scope" value="Bacteria"/>
</dbReference>
<dbReference type="eggNOG" id="COG1003">
    <property type="taxonomic scope" value="Bacteria"/>
</dbReference>
<dbReference type="HOGENOM" id="CLU_004620_3_2_6"/>
<dbReference type="OrthoDB" id="9801272at2"/>
<dbReference type="Proteomes" id="UP000001010">
    <property type="component" value="Chromosome"/>
</dbReference>
<dbReference type="GO" id="GO:0004375">
    <property type="term" value="F:glycine dehydrogenase (decarboxylating) activity"/>
    <property type="evidence" value="ECO:0007669"/>
    <property type="project" value="UniProtKB-EC"/>
</dbReference>
<dbReference type="GO" id="GO:0019464">
    <property type="term" value="P:glycine decarboxylation via glycine cleavage system"/>
    <property type="evidence" value="ECO:0007669"/>
    <property type="project" value="UniProtKB-UniRule"/>
</dbReference>
<dbReference type="CDD" id="cd00613">
    <property type="entry name" value="GDC-P"/>
    <property type="match status" value="2"/>
</dbReference>
<dbReference type="FunFam" id="3.40.640.10:FF:000005">
    <property type="entry name" value="Glycine dehydrogenase (decarboxylating), mitochondrial"/>
    <property type="match status" value="1"/>
</dbReference>
<dbReference type="FunFam" id="3.90.1150.10:FF:000007">
    <property type="entry name" value="Glycine dehydrogenase (decarboxylating), mitochondrial"/>
    <property type="match status" value="1"/>
</dbReference>
<dbReference type="FunFam" id="3.40.640.10:FF:000007">
    <property type="entry name" value="glycine dehydrogenase (Decarboxylating), mitochondrial"/>
    <property type="match status" value="1"/>
</dbReference>
<dbReference type="Gene3D" id="3.90.1150.10">
    <property type="entry name" value="Aspartate Aminotransferase, domain 1"/>
    <property type="match status" value="2"/>
</dbReference>
<dbReference type="Gene3D" id="3.40.640.10">
    <property type="entry name" value="Type I PLP-dependent aspartate aminotransferase-like (Major domain)"/>
    <property type="match status" value="2"/>
</dbReference>
<dbReference type="HAMAP" id="MF_00711">
    <property type="entry name" value="GcvP"/>
    <property type="match status" value="1"/>
</dbReference>
<dbReference type="InterPro" id="IPR003437">
    <property type="entry name" value="GcvP"/>
</dbReference>
<dbReference type="InterPro" id="IPR049316">
    <property type="entry name" value="GDC-P_C"/>
</dbReference>
<dbReference type="InterPro" id="IPR049315">
    <property type="entry name" value="GDC-P_N"/>
</dbReference>
<dbReference type="InterPro" id="IPR020581">
    <property type="entry name" value="GDC_P"/>
</dbReference>
<dbReference type="InterPro" id="IPR015424">
    <property type="entry name" value="PyrdxlP-dep_Trfase"/>
</dbReference>
<dbReference type="InterPro" id="IPR015421">
    <property type="entry name" value="PyrdxlP-dep_Trfase_major"/>
</dbReference>
<dbReference type="InterPro" id="IPR015422">
    <property type="entry name" value="PyrdxlP-dep_Trfase_small"/>
</dbReference>
<dbReference type="NCBIfam" id="TIGR00461">
    <property type="entry name" value="gcvP"/>
    <property type="match status" value="1"/>
</dbReference>
<dbReference type="NCBIfam" id="NF003346">
    <property type="entry name" value="PRK04366.1"/>
    <property type="match status" value="1"/>
</dbReference>
<dbReference type="PANTHER" id="PTHR11773:SF1">
    <property type="entry name" value="GLYCINE DEHYDROGENASE (DECARBOXYLATING), MITOCHONDRIAL"/>
    <property type="match status" value="1"/>
</dbReference>
<dbReference type="PANTHER" id="PTHR11773">
    <property type="entry name" value="GLYCINE DEHYDROGENASE, DECARBOXYLATING"/>
    <property type="match status" value="1"/>
</dbReference>
<dbReference type="Pfam" id="PF21478">
    <property type="entry name" value="GcvP2_C"/>
    <property type="match status" value="1"/>
</dbReference>
<dbReference type="Pfam" id="PF02347">
    <property type="entry name" value="GDC-P"/>
    <property type="match status" value="2"/>
</dbReference>
<dbReference type="SUPFAM" id="SSF53383">
    <property type="entry name" value="PLP-dependent transferases"/>
    <property type="match status" value="2"/>
</dbReference>
<protein>
    <recommendedName>
        <fullName evidence="1">Glycine dehydrogenase (decarboxylating)</fullName>
        <ecNumber evidence="1">1.4.4.2</ecNumber>
    </recommendedName>
    <alternativeName>
        <fullName evidence="1">Glycine cleavage system P-protein</fullName>
    </alternativeName>
    <alternativeName>
        <fullName evidence="1">Glycine decarboxylase</fullName>
    </alternativeName>
    <alternativeName>
        <fullName evidence="1">Glycine dehydrogenase (aminomethyl-transferring)</fullName>
    </alternativeName>
</protein>
<name>GCSP_XANCP</name>
<evidence type="ECO:0000255" key="1">
    <source>
        <dbReference type="HAMAP-Rule" id="MF_00711"/>
    </source>
</evidence>